<comment type="function">
    <text evidence="2">Reversibly blocks Kv11/ERG potassium channels.</text>
</comment>
<comment type="subcellular location">
    <subcellularLocation>
        <location evidence="4">Secreted</location>
    </subcellularLocation>
</comment>
<comment type="tissue specificity">
    <text evidence="6">Expressed by the venom gland.</text>
</comment>
<comment type="domain">
    <text evidence="1">The presence of a 'disulfide through disulfide knot' structurally defines this protein as a knottin.</text>
</comment>
<comment type="domain">
    <text evidence="3">Has the CSalpha/beta fold, which comprises one or two short alpha helices connected to anti-parallel beta-sheets stabilized by three or four disulfide bonds.</text>
</comment>
<comment type="similarity">
    <text evidence="6">Belongs to the ergtoxin family. Gamma-KTx 4 subfamily.</text>
</comment>
<sequence length="43" mass="4840">DRDSCVDKSKCSKYGYYGQCDECCKKAGDRAGNCVYFKCKCNP</sequence>
<organism>
    <name type="scientific">Centruroides limpidus</name>
    <name type="common">Mexican scorpion</name>
    <dbReference type="NCBI Taxonomy" id="6876"/>
    <lineage>
        <taxon>Eukaryota</taxon>
        <taxon>Metazoa</taxon>
        <taxon>Ecdysozoa</taxon>
        <taxon>Arthropoda</taxon>
        <taxon>Chelicerata</taxon>
        <taxon>Arachnida</taxon>
        <taxon>Scorpiones</taxon>
        <taxon>Buthida</taxon>
        <taxon>Buthoidea</taxon>
        <taxon>Buthidae</taxon>
        <taxon>Centruroides</taxon>
    </lineage>
</organism>
<proteinExistence type="evidence at protein level"/>
<dbReference type="EMBL" id="AY159344">
    <property type="protein sequence ID" value="AAO22222.1"/>
    <property type="molecule type" value="mRNA"/>
</dbReference>
<dbReference type="SMR" id="Q86QU9"/>
<dbReference type="GO" id="GO:0005576">
    <property type="term" value="C:extracellular region"/>
    <property type="evidence" value="ECO:0007669"/>
    <property type="project" value="UniProtKB-SubCell"/>
</dbReference>
<dbReference type="GO" id="GO:0019870">
    <property type="term" value="F:potassium channel inhibitor activity"/>
    <property type="evidence" value="ECO:0007669"/>
    <property type="project" value="InterPro"/>
</dbReference>
<dbReference type="GO" id="GO:0090729">
    <property type="term" value="F:toxin activity"/>
    <property type="evidence" value="ECO:0007669"/>
    <property type="project" value="UniProtKB-KW"/>
</dbReference>
<dbReference type="Gene3D" id="3.30.30.10">
    <property type="entry name" value="Knottin, scorpion toxin-like"/>
    <property type="match status" value="1"/>
</dbReference>
<dbReference type="InterPro" id="IPR012622">
    <property type="entry name" value="Ergtoxin"/>
</dbReference>
<dbReference type="InterPro" id="IPR036574">
    <property type="entry name" value="Scorpion_toxin-like_sf"/>
</dbReference>
<dbReference type="Pfam" id="PF08086">
    <property type="entry name" value="Toxin_17"/>
    <property type="match status" value="1"/>
</dbReference>
<dbReference type="SUPFAM" id="SSF57095">
    <property type="entry name" value="Scorpion toxin-like"/>
    <property type="match status" value="1"/>
</dbReference>
<dbReference type="PROSITE" id="PS60026">
    <property type="entry name" value="ERGTX"/>
    <property type="match status" value="1"/>
</dbReference>
<evidence type="ECO:0000250" key="1"/>
<evidence type="ECO:0000250" key="2">
    <source>
        <dbReference type="UniProtKB" id="P59940"/>
    </source>
</evidence>
<evidence type="ECO:0000250" key="3">
    <source>
        <dbReference type="UniProtKB" id="Q86QT3"/>
    </source>
</evidence>
<evidence type="ECO:0000269" key="4">
    <source>
    </source>
</evidence>
<evidence type="ECO:0000303" key="5">
    <source>
    </source>
</evidence>
<evidence type="ECO:0000305" key="6"/>
<name>KGX41_CENLI</name>
<feature type="chain" id="PRO_0000066851" description="Potassium channel toxin gamma-KTx 4.1" evidence="4">
    <location>
        <begin position="1"/>
        <end position="43"/>
    </location>
</feature>
<feature type="disulfide bond" evidence="3">
    <location>
        <begin position="5"/>
        <end position="23"/>
    </location>
</feature>
<feature type="disulfide bond" evidence="3">
    <location>
        <begin position="11"/>
        <end position="34"/>
    </location>
</feature>
<feature type="disulfide bond" evidence="3">
    <location>
        <begin position="20"/>
        <end position="39"/>
    </location>
</feature>
<feature type="disulfide bond" evidence="3">
    <location>
        <begin position="24"/>
        <end position="41"/>
    </location>
</feature>
<accession>Q86QU9</accession>
<reference key="1">
    <citation type="journal article" date="2002" name="FEBS Lett.">
        <title>A large number of novel Ergtoxin-like genes and ERG K+-channels blocking peptides from scorpions of the genus Centruroides.</title>
        <authorList>
            <person name="Corona M."/>
            <person name="Gurrola G.B."/>
            <person name="Merino E."/>
            <person name="Cassulini R.R."/>
            <person name="Valdez-Cruz N.A."/>
            <person name="Garcia B."/>
            <person name="Ramirez-Dominguez M.E."/>
            <person name="Coronas F.I."/>
            <person name="Zamudio F.Z."/>
            <person name="Wanke E."/>
            <person name="Possani L.D."/>
        </authorList>
    </citation>
    <scope>NUCLEOTIDE SEQUENCE [MRNA]</scope>
    <scope>PROTEIN SEQUENCE</scope>
    <scope>SUBCELLULAR LOCATION</scope>
    <scope>NOMENCLATURE</scope>
    <source>
        <tissue>Venom</tissue>
        <tissue>Venom gland</tissue>
    </source>
</reference>
<keyword id="KW-0903">Direct protein sequencing</keyword>
<keyword id="KW-1015">Disulfide bond</keyword>
<keyword id="KW-0872">Ion channel impairing toxin</keyword>
<keyword id="KW-0960">Knottin</keyword>
<keyword id="KW-0528">Neurotoxin</keyword>
<keyword id="KW-0632">Potassium channel impairing toxin</keyword>
<keyword id="KW-0964">Secreted</keyword>
<keyword id="KW-0800">Toxin</keyword>
<keyword id="KW-1220">Voltage-gated potassium channel impairing toxin</keyword>
<protein>
    <recommendedName>
        <fullName evidence="5">Potassium channel toxin gamma-KTx 4.1</fullName>
    </recommendedName>
    <alternativeName>
        <fullName evidence="6">CllErgTx2</fullName>
        <shortName evidence="5">CllErg2</shortName>
        <shortName evidence="5">ErgTx2</shortName>
    </alternativeName>
    <alternativeName>
        <fullName evidence="5">Ergtoxin-like protein</fullName>
    </alternativeName>
</protein>